<proteinExistence type="evidence at protein level"/>
<gene>
    <name type="primary">HHF1</name>
    <name type="ORF">TTHERM_00498190</name>
</gene>
<gene>
    <name type="primary">HHF2</name>
    <name type="ORF">TTHERM_00189170</name>
</gene>
<keyword id="KW-0007">Acetylation</keyword>
<keyword id="KW-0158">Chromosome</keyword>
<keyword id="KW-0903">Direct protein sequencing</keyword>
<keyword id="KW-0238">DNA-binding</keyword>
<keyword id="KW-0544">Nucleosome core</keyword>
<keyword id="KW-0539">Nucleus</keyword>
<keyword id="KW-1185">Reference proteome</keyword>
<protein>
    <recommendedName>
        <fullName>Histone H4</fullName>
    </recommendedName>
</protein>
<reference key="1">
    <citation type="journal article" date="1984" name="Nucleic Acids Res.">
        <title>Tetrahymena H4 genes: structure, evolution and organization in macro- and micronuclei.</title>
        <authorList>
            <person name="Bannon G.A."/>
            <person name="Bowen J.K."/>
            <person name="Yao M.-C."/>
            <person name="Gorovsky M.A."/>
        </authorList>
    </citation>
    <scope>NUCLEOTIDE SEQUENCE [GENOMIC DNA] (HHF1 AND HHF2)</scope>
</reference>
<reference key="2">
    <citation type="journal article" date="1987" name="Nucleic Acids Res.">
        <title>Unusual features of transcribed and translated regions of the histone H4 gene family of Tetrahymena thermophila.</title>
        <authorList>
            <person name="Horowitz S."/>
            <person name="Bowen J.K."/>
            <person name="Bannon G.A."/>
            <person name="Gorovsky M.A."/>
        </authorList>
    </citation>
    <scope>NUCLEOTIDE SEQUENCE [GENOMIC DNA] (HHF1 AND HHF2)</scope>
</reference>
<reference key="3">
    <citation type="journal article" date="2006" name="PLoS Biol.">
        <title>Macronuclear genome sequence of the ciliate Tetrahymena thermophila, a model eukaryote.</title>
        <authorList>
            <person name="Eisen J.A."/>
            <person name="Coyne R.S."/>
            <person name="Wu M."/>
            <person name="Wu D."/>
            <person name="Thiagarajan M."/>
            <person name="Wortman J.R."/>
            <person name="Badger J.H."/>
            <person name="Ren Q."/>
            <person name="Amedeo P."/>
            <person name="Jones K.M."/>
            <person name="Tallon L.J."/>
            <person name="Delcher A.L."/>
            <person name="Salzberg S.L."/>
            <person name="Silva J.C."/>
            <person name="Haas B.J."/>
            <person name="Majoros W.H."/>
            <person name="Farzad M."/>
            <person name="Carlton J.M."/>
            <person name="Smith R.K. Jr."/>
            <person name="Garg J."/>
            <person name="Pearlman R.E."/>
            <person name="Karrer K.M."/>
            <person name="Sun L."/>
            <person name="Manning G."/>
            <person name="Elde N.C."/>
            <person name="Turkewitz A.P."/>
            <person name="Asai D.J."/>
            <person name="Wilkes D.E."/>
            <person name="Wang Y."/>
            <person name="Cai H."/>
            <person name="Collins K."/>
            <person name="Stewart B.A."/>
            <person name="Lee S.R."/>
            <person name="Wilamowska K."/>
            <person name="Weinberg Z."/>
            <person name="Ruzzo W.L."/>
            <person name="Wloga D."/>
            <person name="Gaertig J."/>
            <person name="Frankel J."/>
            <person name="Tsao C.-C."/>
            <person name="Gorovsky M.A."/>
            <person name="Keeling P.J."/>
            <person name="Waller R.F."/>
            <person name="Patron N.J."/>
            <person name="Cherry J.M."/>
            <person name="Stover N.A."/>
            <person name="Krieger C.J."/>
            <person name="del Toro C."/>
            <person name="Ryder H.F."/>
            <person name="Williamson S.C."/>
            <person name="Barbeau R.A."/>
            <person name="Hamilton E.P."/>
            <person name="Orias E."/>
        </authorList>
    </citation>
    <scope>NUCLEOTIDE SEQUENCE [LARGE SCALE GENOMIC DNA] (HHF1 AND HHF2)</scope>
    <source>
        <strain>SB210</strain>
    </source>
</reference>
<reference key="4">
    <citation type="journal article" date="1979" name="Proc. Natl. Acad. Sci. U.S.A.">
        <title>Amino-acid sequence of Tetrahymena histone H4 differs from that of higher eukaryotes.</title>
        <authorList>
            <person name="Glover C.V.C."/>
            <person name="Gorovsky M.A."/>
        </authorList>
    </citation>
    <scope>PROTEIN SEQUENCE OF 2-54 AND 85-97</scope>
</reference>
<reference key="5">
    <citation type="journal article" date="1995" name="Proc. Natl. Acad. Sci. U.S.A.">
        <title>Conservation of deposition-related acetylation sites in newly synthesized histones H3 and H4.</title>
        <authorList>
            <person name="Sobel R.E."/>
            <person name="Cook R.G."/>
            <person name="Perry C.A."/>
            <person name="Annunziato A.T."/>
            <person name="Allis C.D."/>
        </authorList>
    </citation>
    <scope>ACETYLATION AT LYS-8 AND LYS-16</scope>
</reference>
<reference key="6">
    <citation type="journal article" date="2003" name="Biochemistry">
        <title>Molecular basis for Gcn5/PCAF histone acetyltransferase selectivity for histone and nonhistone substrates.</title>
        <authorList>
            <person name="Poux A.N."/>
            <person name="Marmorstein R."/>
        </authorList>
    </citation>
    <scope>INTERACTION WITH GCN5</scope>
</reference>
<reference key="7">
    <citation type="journal article" date="2007" name="J. Biol. Chem.">
        <title>Organismal differences in post-translational modifications in histones H3 and H4.</title>
        <authorList>
            <person name="Garcia B.A."/>
            <person name="Hake S.B."/>
            <person name="Diaz R.L."/>
            <person name="Kauer M."/>
            <person name="Morris S.A."/>
            <person name="Recht J."/>
            <person name="Shabanowitz J."/>
            <person name="Mishra N."/>
            <person name="Strahl B.D."/>
            <person name="Allis C.D."/>
            <person name="Hunt D.F."/>
        </authorList>
    </citation>
    <scope>ACETYLATION AT LYS-5; LYS-8; LYS-12 AND LYS-16</scope>
    <scope>IDENTIFICATION BY MASS SPECTROMETRY</scope>
</reference>
<sequence length="103" mass="11328">MAGGKGGKGMGKVGAKRHSRKSNKASIEGITKPAIRRLARRGGVKRISSFIYDDSRQVLKSFLENVVRDAVTYTEHARRKTVTAMDVVYALKRQGRTLYGFGG</sequence>
<organism>
    <name type="scientific">Tetrahymena thermophila (strain SB210)</name>
    <dbReference type="NCBI Taxonomy" id="312017"/>
    <lineage>
        <taxon>Eukaryota</taxon>
        <taxon>Sar</taxon>
        <taxon>Alveolata</taxon>
        <taxon>Ciliophora</taxon>
        <taxon>Intramacronucleata</taxon>
        <taxon>Oligohymenophorea</taxon>
        <taxon>Hymenostomatida</taxon>
        <taxon>Tetrahymenina</taxon>
        <taxon>Tetrahymenidae</taxon>
        <taxon>Tetrahymena</taxon>
    </lineage>
</organism>
<name>H4_TETTS</name>
<dbReference type="EMBL" id="X00417">
    <property type="protein sequence ID" value="CAA25121.1"/>
    <property type="molecule type" value="Genomic_DNA"/>
</dbReference>
<dbReference type="EMBL" id="X04755">
    <property type="protein sequence ID" value="CAA28452.1"/>
    <property type="molecule type" value="Genomic_DNA"/>
</dbReference>
<dbReference type="EMBL" id="GG662693">
    <property type="protein sequence ID" value="EAR96348.1"/>
    <property type="molecule type" value="Genomic_DNA"/>
</dbReference>
<dbReference type="EMBL" id="GG662212">
    <property type="protein sequence ID" value="EAS07765.1"/>
    <property type="molecule type" value="Genomic_DNA"/>
</dbReference>
<dbReference type="PIR" id="A02650">
    <property type="entry name" value="A02650"/>
</dbReference>
<dbReference type="PIR" id="A25875">
    <property type="entry name" value="A25875"/>
</dbReference>
<dbReference type="RefSeq" id="XP_001016593.1">
    <property type="nucleotide sequence ID" value="XM_001016593.3"/>
</dbReference>
<dbReference type="RefSeq" id="XP_001028007.1">
    <property type="nucleotide sequence ID" value="XM_001028007.3"/>
</dbReference>
<dbReference type="SMR" id="P69152"/>
<dbReference type="FunCoup" id="P69152">
    <property type="interactions" value="266"/>
</dbReference>
<dbReference type="STRING" id="312017.P69152"/>
<dbReference type="iPTMnet" id="P69152"/>
<dbReference type="EnsemblProtists" id="EAR96348">
    <property type="protein sequence ID" value="EAR96348"/>
    <property type="gene ID" value="TTHERM_00189170"/>
</dbReference>
<dbReference type="EnsemblProtists" id="EAS07765">
    <property type="protein sequence ID" value="EAS07765"/>
    <property type="gene ID" value="TTHERM_00498190"/>
</dbReference>
<dbReference type="GeneID" id="7823613"/>
<dbReference type="GeneID" id="7845533"/>
<dbReference type="KEGG" id="tet:TTHERM_00189170"/>
<dbReference type="KEGG" id="tet:TTHERM_00498190"/>
<dbReference type="eggNOG" id="KOG3467">
    <property type="taxonomic scope" value="Eukaryota"/>
</dbReference>
<dbReference type="HOGENOM" id="CLU_109117_2_3_1"/>
<dbReference type="InParanoid" id="P69152"/>
<dbReference type="OMA" id="QKEHING"/>
<dbReference type="OrthoDB" id="306905at2759"/>
<dbReference type="Proteomes" id="UP000009168">
    <property type="component" value="Unassembled WGS sequence"/>
</dbReference>
<dbReference type="GO" id="GO:0000786">
    <property type="term" value="C:nucleosome"/>
    <property type="evidence" value="ECO:0007669"/>
    <property type="project" value="UniProtKB-KW"/>
</dbReference>
<dbReference type="GO" id="GO:0005634">
    <property type="term" value="C:nucleus"/>
    <property type="evidence" value="ECO:0007669"/>
    <property type="project" value="UniProtKB-SubCell"/>
</dbReference>
<dbReference type="GO" id="GO:0003677">
    <property type="term" value="F:DNA binding"/>
    <property type="evidence" value="ECO:0007669"/>
    <property type="project" value="UniProtKB-KW"/>
</dbReference>
<dbReference type="GO" id="GO:0046982">
    <property type="term" value="F:protein heterodimerization activity"/>
    <property type="evidence" value="ECO:0007669"/>
    <property type="project" value="InterPro"/>
</dbReference>
<dbReference type="GO" id="GO:0030527">
    <property type="term" value="F:structural constituent of chromatin"/>
    <property type="evidence" value="ECO:0007669"/>
    <property type="project" value="InterPro"/>
</dbReference>
<dbReference type="CDD" id="cd22912">
    <property type="entry name" value="HFD_H4"/>
    <property type="match status" value="1"/>
</dbReference>
<dbReference type="FunFam" id="1.10.20.10:FF:000012">
    <property type="entry name" value="Histone H4"/>
    <property type="match status" value="1"/>
</dbReference>
<dbReference type="Gene3D" id="1.10.20.10">
    <property type="entry name" value="Histone, subunit A"/>
    <property type="match status" value="1"/>
</dbReference>
<dbReference type="InterPro" id="IPR035425">
    <property type="entry name" value="CENP-T/H4_C"/>
</dbReference>
<dbReference type="InterPro" id="IPR009072">
    <property type="entry name" value="Histone-fold"/>
</dbReference>
<dbReference type="InterPro" id="IPR001951">
    <property type="entry name" value="Histone_H4"/>
</dbReference>
<dbReference type="InterPro" id="IPR019809">
    <property type="entry name" value="Histone_H4_CS"/>
</dbReference>
<dbReference type="PANTHER" id="PTHR10484">
    <property type="entry name" value="HISTONE H4"/>
    <property type="match status" value="1"/>
</dbReference>
<dbReference type="Pfam" id="PF15511">
    <property type="entry name" value="CENP-T_C"/>
    <property type="match status" value="1"/>
</dbReference>
<dbReference type="PRINTS" id="PR00623">
    <property type="entry name" value="HISTONEH4"/>
</dbReference>
<dbReference type="SMART" id="SM00417">
    <property type="entry name" value="H4"/>
    <property type="match status" value="1"/>
</dbReference>
<dbReference type="SUPFAM" id="SSF47113">
    <property type="entry name" value="Histone-fold"/>
    <property type="match status" value="1"/>
</dbReference>
<dbReference type="PROSITE" id="PS00047">
    <property type="entry name" value="HISTONE_H4"/>
    <property type="match status" value="1"/>
</dbReference>
<comment type="function">
    <text>Core component of nucleosome. Nucleosomes wrap and compact DNA into chromatin, limiting DNA accessibility to the cellular machineries which require DNA as a template. Histones thereby play a central role in transcription regulation, DNA repair, DNA replication and chromosomal stability. DNA accessibility is regulated via a complex set of post-translational modifications of histones, also called histone code, and nucleosome remodeling.</text>
</comment>
<comment type="subunit">
    <text>The nucleosome is a histone octamer containing two molecules each of H2A, H2B, H3 and H4 assembled in one H3-H4 heterotetramer and two H2A-H2B heterodimers. The octamer wraps approximately 147 bp of DNA.</text>
</comment>
<comment type="subcellular location">
    <subcellularLocation>
        <location evidence="1">Nucleus</location>
    </subcellularLocation>
    <subcellularLocation>
        <location evidence="1">Chromosome</location>
    </subcellularLocation>
</comment>
<comment type="PTM">
    <text evidence="3 5">The N-terminus is not acetylated.</text>
</comment>
<comment type="similarity">
    <text evidence="6">Belongs to the histone H4 family.</text>
</comment>
<feature type="initiator methionine" description="Removed" evidence="4">
    <location>
        <position position="1"/>
    </location>
</feature>
<feature type="chain" id="PRO_0000158367" description="Histone H4">
    <location>
        <begin position="2"/>
        <end position="103"/>
    </location>
</feature>
<feature type="DNA-binding region">
    <location>
        <begin position="16"/>
        <end position="21"/>
    </location>
</feature>
<feature type="region of interest" description="Disordered" evidence="2">
    <location>
        <begin position="1"/>
        <end position="29"/>
    </location>
</feature>
<feature type="compositionally biased region" description="Gly residues" evidence="2">
    <location>
        <begin position="1"/>
        <end position="12"/>
    </location>
</feature>
<feature type="compositionally biased region" description="Basic residues" evidence="2">
    <location>
        <begin position="14"/>
        <end position="23"/>
    </location>
</feature>
<feature type="modified residue" description="N6-acetyllysine" evidence="3">
    <location>
        <position position="5"/>
    </location>
</feature>
<feature type="modified residue" description="N6-acetyllysine" evidence="3 5">
    <location>
        <position position="8"/>
    </location>
</feature>
<feature type="modified residue" description="N6-acetyllysine" evidence="3">
    <location>
        <position position="12"/>
    </location>
</feature>
<feature type="modified residue" description="N6-acetyllysine" evidence="3 5">
    <location>
        <position position="16"/>
    </location>
</feature>
<evidence type="ECO:0000250" key="1"/>
<evidence type="ECO:0000256" key="2">
    <source>
        <dbReference type="SAM" id="MobiDB-lite"/>
    </source>
</evidence>
<evidence type="ECO:0000269" key="3">
    <source>
    </source>
</evidence>
<evidence type="ECO:0000269" key="4">
    <source>
    </source>
</evidence>
<evidence type="ECO:0000269" key="5">
    <source>
    </source>
</evidence>
<evidence type="ECO:0000305" key="6"/>
<accession>P69152</accession>
<accession>P02311</accession>
<accession>P02312</accession>